<gene>
    <name evidence="1" type="primary">glnE</name>
    <name type="ordered locus">PMI2359</name>
</gene>
<evidence type="ECO:0000255" key="1">
    <source>
        <dbReference type="HAMAP-Rule" id="MF_00802"/>
    </source>
</evidence>
<proteinExistence type="inferred from homology"/>
<dbReference type="EC" id="2.7.7.89" evidence="1"/>
<dbReference type="EC" id="2.7.7.42" evidence="1"/>
<dbReference type="EMBL" id="AM942759">
    <property type="protein sequence ID" value="CAR44658.1"/>
    <property type="molecule type" value="Genomic_DNA"/>
</dbReference>
<dbReference type="RefSeq" id="WP_012368328.1">
    <property type="nucleotide sequence ID" value="NC_010554.1"/>
</dbReference>
<dbReference type="SMR" id="B4EW47"/>
<dbReference type="EnsemblBacteria" id="CAR44658">
    <property type="protein sequence ID" value="CAR44658"/>
    <property type="gene ID" value="PMI2359"/>
</dbReference>
<dbReference type="GeneID" id="6802288"/>
<dbReference type="KEGG" id="pmr:PMI2359"/>
<dbReference type="PATRIC" id="fig|529507.6.peg.2307"/>
<dbReference type="eggNOG" id="COG1391">
    <property type="taxonomic scope" value="Bacteria"/>
</dbReference>
<dbReference type="HOGENOM" id="CLU_006233_0_1_6"/>
<dbReference type="Proteomes" id="UP000008319">
    <property type="component" value="Chromosome"/>
</dbReference>
<dbReference type="GO" id="GO:0005829">
    <property type="term" value="C:cytosol"/>
    <property type="evidence" value="ECO:0007669"/>
    <property type="project" value="TreeGrafter"/>
</dbReference>
<dbReference type="GO" id="GO:0008882">
    <property type="term" value="F:[glutamate-ammonia-ligase] adenylyltransferase activity"/>
    <property type="evidence" value="ECO:0007669"/>
    <property type="project" value="UniProtKB-UniRule"/>
</dbReference>
<dbReference type="GO" id="GO:0047388">
    <property type="term" value="F:[glutamine synthetase]-adenylyl-L-tyrosine phosphorylase activity"/>
    <property type="evidence" value="ECO:0007669"/>
    <property type="project" value="UniProtKB-EC"/>
</dbReference>
<dbReference type="GO" id="GO:0005524">
    <property type="term" value="F:ATP binding"/>
    <property type="evidence" value="ECO:0007669"/>
    <property type="project" value="UniProtKB-UniRule"/>
</dbReference>
<dbReference type="GO" id="GO:0000287">
    <property type="term" value="F:magnesium ion binding"/>
    <property type="evidence" value="ECO:0007669"/>
    <property type="project" value="UniProtKB-UniRule"/>
</dbReference>
<dbReference type="GO" id="GO:0000820">
    <property type="term" value="P:regulation of glutamine family amino acid metabolic process"/>
    <property type="evidence" value="ECO:0007669"/>
    <property type="project" value="UniProtKB-UniRule"/>
</dbReference>
<dbReference type="CDD" id="cd05401">
    <property type="entry name" value="NT_GlnE_GlnD_like"/>
    <property type="match status" value="2"/>
</dbReference>
<dbReference type="FunFam" id="1.20.120.1510:FF:000001">
    <property type="entry name" value="Bifunctional glutamine synthetase adenylyltransferase/adenylyl-removing enzyme"/>
    <property type="match status" value="1"/>
</dbReference>
<dbReference type="FunFam" id="1.20.120.330:FF:000005">
    <property type="entry name" value="Bifunctional glutamine synthetase adenylyltransferase/adenylyl-removing enzyme"/>
    <property type="match status" value="1"/>
</dbReference>
<dbReference type="FunFam" id="1.20.120.330:FF:000008">
    <property type="entry name" value="Bifunctional glutamine synthetase adenylyltransferase/adenylyl-removing enzyme"/>
    <property type="match status" value="1"/>
</dbReference>
<dbReference type="FunFam" id="3.30.460.10:FF:000009">
    <property type="entry name" value="Bifunctional glutamine synthetase adenylyltransferase/adenylyl-removing enzyme"/>
    <property type="match status" value="1"/>
</dbReference>
<dbReference type="FunFam" id="3.30.460.10:FF:000014">
    <property type="entry name" value="Bifunctional glutamine synthetase adenylyltransferase/adenylyl-removing enzyme"/>
    <property type="match status" value="1"/>
</dbReference>
<dbReference type="Gene3D" id="1.20.120.1510">
    <property type="match status" value="1"/>
</dbReference>
<dbReference type="Gene3D" id="3.30.460.10">
    <property type="entry name" value="Beta Polymerase, domain 2"/>
    <property type="match status" value="2"/>
</dbReference>
<dbReference type="Gene3D" id="1.10.4050.10">
    <property type="entry name" value="Glutamine synthase adenylyltransferase GlnE"/>
    <property type="match status" value="1"/>
</dbReference>
<dbReference type="Gene3D" id="1.20.120.330">
    <property type="entry name" value="Nucleotidyltransferases domain 2"/>
    <property type="match status" value="2"/>
</dbReference>
<dbReference type="HAMAP" id="MF_00802">
    <property type="entry name" value="GlnE"/>
    <property type="match status" value="1"/>
</dbReference>
<dbReference type="InterPro" id="IPR023057">
    <property type="entry name" value="GlnE"/>
</dbReference>
<dbReference type="InterPro" id="IPR005190">
    <property type="entry name" value="GlnE_rpt_dom"/>
</dbReference>
<dbReference type="InterPro" id="IPR043519">
    <property type="entry name" value="NT_sf"/>
</dbReference>
<dbReference type="InterPro" id="IPR013546">
    <property type="entry name" value="PII_UdlTrfase/GS_AdlTrfase"/>
</dbReference>
<dbReference type="NCBIfam" id="NF008292">
    <property type="entry name" value="PRK11072.1"/>
    <property type="match status" value="1"/>
</dbReference>
<dbReference type="PANTHER" id="PTHR30621:SF0">
    <property type="entry name" value="BIFUNCTIONAL GLUTAMINE SYNTHETASE ADENYLYLTRANSFERASE_ADENYLYL-REMOVING ENZYME"/>
    <property type="match status" value="1"/>
</dbReference>
<dbReference type="PANTHER" id="PTHR30621">
    <property type="entry name" value="GLUTAMINE SYNTHETASE ADENYLYLTRANSFERASE"/>
    <property type="match status" value="1"/>
</dbReference>
<dbReference type="Pfam" id="PF08335">
    <property type="entry name" value="GlnD_UR_UTase"/>
    <property type="match status" value="2"/>
</dbReference>
<dbReference type="Pfam" id="PF03710">
    <property type="entry name" value="GlnE"/>
    <property type="match status" value="2"/>
</dbReference>
<dbReference type="SUPFAM" id="SSF81301">
    <property type="entry name" value="Nucleotidyltransferase"/>
    <property type="match status" value="2"/>
</dbReference>
<dbReference type="SUPFAM" id="SSF81593">
    <property type="entry name" value="Nucleotidyltransferase substrate binding subunit/domain"/>
    <property type="match status" value="2"/>
</dbReference>
<accession>B4EW47</accession>
<sequence>MSANSVFQQLWDKAQCTFSTKLNELAPFSEREQQFFAFSPFATEHLRVNPHWLTEIRQTPPVSDEWQNYSSQLKQQLTHVDNEDDLMAILRQFRHQQLVRIAWSQFFQLCDTPCTLKQLSVLAETLISVAKDKLYQQCCQQWGTPCDREGKPQPLLILGMGKLGGLELNFSSDIDLIFAYPENGVTQGGRRELDNAQFFTRLGQKLIKVLDQHTMDGFVYRVDMRLRPFGESGPLVMSFAALEDYYQEQGRDWERYAMVKARVLGAEKKEYCQILRQMLRPFVYRRYIDFSVIQSLRNMKSMISREVRRRGMIDNIKLGAGGIREIEFITQVFQLIRGGREPELQSHSLLTVLNVIAKLELLSAQETSQLADSYLFLRRLENLLQSIADQQTQTLPDNLEDKARLAFAMGFDDWQMLYQQINQKMQAVSVIFTQLIGEDDENEDEEDVSEFKRLWLLGRLPDSATLFHQGLTAEDRQAICQTLQLFRQDISKRTIGPRGRDVLDALMPKLLAKVCLQPQALVILQRITPLLLGIVSRTTYLELMQESDEVLTHVVRLCAASPMIAEQLTRHPLLLDELLDPHSLYQPLPLNAYQDELRQYLLRVPEEDEEQRLEALRQFKQAQLLRIAAEDIAGVLPVMKVSDHLTYLAEAIIHAVVHQAWSYMVKRYGEPAHLAQRDGLGFAVVGYGKLGGWELGYSSDLDLVFLLDCPMNILTTGAKQIDARQFYLRLAQRIIHLFSTRTSSGVLYEVDARLRPSGESGMLVSTIQAFDEYQKNEAWTWEHQALIRARMIYGDDQLQQMFARTRHETLCLARNATVLQQEVREMRQKMVQHLAPTQSNTFDLKASSGGITDIEFIAQYLVLRFSHQYPALTRWSDNVRILELMAKYQVMSEQEAQLLTQAYVTLRNELHHLALQTLPAVVDGDCFITERQWVLSSKQKWLDE</sequence>
<keyword id="KW-0067">ATP-binding</keyword>
<keyword id="KW-0460">Magnesium</keyword>
<keyword id="KW-0511">Multifunctional enzyme</keyword>
<keyword id="KW-0547">Nucleotide-binding</keyword>
<keyword id="KW-0548">Nucleotidyltransferase</keyword>
<keyword id="KW-1185">Reference proteome</keyword>
<keyword id="KW-0808">Transferase</keyword>
<reference key="1">
    <citation type="journal article" date="2008" name="J. Bacteriol.">
        <title>Complete genome sequence of uropathogenic Proteus mirabilis, a master of both adherence and motility.</title>
        <authorList>
            <person name="Pearson M.M."/>
            <person name="Sebaihia M."/>
            <person name="Churcher C."/>
            <person name="Quail M.A."/>
            <person name="Seshasayee A.S."/>
            <person name="Luscombe N.M."/>
            <person name="Abdellah Z."/>
            <person name="Arrosmith C."/>
            <person name="Atkin B."/>
            <person name="Chillingworth T."/>
            <person name="Hauser H."/>
            <person name="Jagels K."/>
            <person name="Moule S."/>
            <person name="Mungall K."/>
            <person name="Norbertczak H."/>
            <person name="Rabbinowitsch E."/>
            <person name="Walker D."/>
            <person name="Whithead S."/>
            <person name="Thomson N.R."/>
            <person name="Rather P.N."/>
            <person name="Parkhill J."/>
            <person name="Mobley H.L.T."/>
        </authorList>
    </citation>
    <scope>NUCLEOTIDE SEQUENCE [LARGE SCALE GENOMIC DNA]</scope>
    <source>
        <strain>HI4320</strain>
    </source>
</reference>
<protein>
    <recommendedName>
        <fullName evidence="1">Bifunctional glutamine synthetase adenylyltransferase/adenylyl-removing enzyme</fullName>
    </recommendedName>
    <alternativeName>
        <fullName evidence="1">ATP:glutamine synthetase adenylyltransferase</fullName>
    </alternativeName>
    <alternativeName>
        <fullName evidence="1">ATase</fullName>
    </alternativeName>
    <domain>
        <recommendedName>
            <fullName evidence="1">Glutamine synthetase adenylyl-L-tyrosine phosphorylase</fullName>
            <ecNumber evidence="1">2.7.7.89</ecNumber>
        </recommendedName>
        <alternativeName>
            <fullName evidence="1">Adenylyl removase</fullName>
            <shortName evidence="1">AR</shortName>
            <shortName evidence="1">AT-N</shortName>
        </alternativeName>
    </domain>
    <domain>
        <recommendedName>
            <fullName evidence="1">Glutamine synthetase adenylyl transferase</fullName>
            <ecNumber evidence="1">2.7.7.42</ecNumber>
        </recommendedName>
        <alternativeName>
            <fullName evidence="1">Adenylyl transferase</fullName>
            <shortName evidence="1">AT</shortName>
            <shortName evidence="1">AT-C</shortName>
        </alternativeName>
    </domain>
</protein>
<name>GLNE_PROMH</name>
<feature type="chain" id="PRO_1000133909" description="Bifunctional glutamine synthetase adenylyltransferase/adenylyl-removing enzyme">
    <location>
        <begin position="1"/>
        <end position="944"/>
    </location>
</feature>
<feature type="region of interest" description="Adenylyl removase" evidence="1">
    <location>
        <begin position="1"/>
        <end position="440"/>
    </location>
</feature>
<feature type="region of interest" description="Adenylyl transferase" evidence="1">
    <location>
        <begin position="448"/>
        <end position="944"/>
    </location>
</feature>
<comment type="function">
    <text evidence="1">Involved in the regulation of glutamine synthetase GlnA, a key enzyme in the process to assimilate ammonia. When cellular nitrogen levels are high, the C-terminal adenylyl transferase (AT) inactivates GlnA by covalent transfer of an adenylyl group from ATP to specific tyrosine residue of GlnA, thus reducing its activity. Conversely, when nitrogen levels are low, the N-terminal adenylyl removase (AR) activates GlnA by removing the adenylyl group by phosphorolysis, increasing its activity. The regulatory region of GlnE binds the signal transduction protein PII (GlnB) which indicates the nitrogen status of the cell.</text>
</comment>
<comment type="catalytic activity">
    <reaction evidence="1">
        <text>[glutamine synthetase]-O(4)-(5'-adenylyl)-L-tyrosine + phosphate = [glutamine synthetase]-L-tyrosine + ADP</text>
        <dbReference type="Rhea" id="RHEA:43716"/>
        <dbReference type="Rhea" id="RHEA-COMP:10660"/>
        <dbReference type="Rhea" id="RHEA-COMP:10661"/>
        <dbReference type="ChEBI" id="CHEBI:43474"/>
        <dbReference type="ChEBI" id="CHEBI:46858"/>
        <dbReference type="ChEBI" id="CHEBI:83624"/>
        <dbReference type="ChEBI" id="CHEBI:456216"/>
        <dbReference type="EC" id="2.7.7.89"/>
    </reaction>
</comment>
<comment type="catalytic activity">
    <reaction evidence="1">
        <text>[glutamine synthetase]-L-tyrosine + ATP = [glutamine synthetase]-O(4)-(5'-adenylyl)-L-tyrosine + diphosphate</text>
        <dbReference type="Rhea" id="RHEA:18589"/>
        <dbReference type="Rhea" id="RHEA-COMP:10660"/>
        <dbReference type="Rhea" id="RHEA-COMP:10661"/>
        <dbReference type="ChEBI" id="CHEBI:30616"/>
        <dbReference type="ChEBI" id="CHEBI:33019"/>
        <dbReference type="ChEBI" id="CHEBI:46858"/>
        <dbReference type="ChEBI" id="CHEBI:83624"/>
        <dbReference type="EC" id="2.7.7.42"/>
    </reaction>
</comment>
<comment type="cofactor">
    <cofactor evidence="1">
        <name>Mg(2+)</name>
        <dbReference type="ChEBI" id="CHEBI:18420"/>
    </cofactor>
</comment>
<comment type="similarity">
    <text evidence="1">Belongs to the GlnE family.</text>
</comment>
<organism>
    <name type="scientific">Proteus mirabilis (strain HI4320)</name>
    <dbReference type="NCBI Taxonomy" id="529507"/>
    <lineage>
        <taxon>Bacteria</taxon>
        <taxon>Pseudomonadati</taxon>
        <taxon>Pseudomonadota</taxon>
        <taxon>Gammaproteobacteria</taxon>
        <taxon>Enterobacterales</taxon>
        <taxon>Morganellaceae</taxon>
        <taxon>Proteus</taxon>
    </lineage>
</organism>